<comment type="function">
    <text evidence="3 4 5">Potently blocks the voltage-gated potassium channel Kv1.1/KCNA1 (Ki=75 pM), KcsA (Ki~1 nM) and moderately blocks Kv1.2/KCNA2 (Ki=2.5 nM) and Kv1.3/KCNA3 (Ki=3.1 nM) (PubMed:32181366, PubMed:38102952, PubMed:9298966). Also facilitates acetylcholine release at the avian neuromuscular junction (PubMed:9298966). Blockade and dissociation rate are sensitive to voltage (PubMed:32181366, PubMed:38102952).</text>
</comment>
<comment type="subcellular location">
    <subcellularLocation>
        <location evidence="9">Secreted</location>
    </subcellularLocation>
    <subcellularLocation>
        <location evidence="8">Nematocyst</location>
    </subcellularLocation>
</comment>
<comment type="mass spectrometry" mass="4054.65" method="Electrospray" evidence="5"/>
<comment type="miscellaneous">
    <text evidence="4">Very weakly blocks potassium channels Kv1.5/KCNA5 (Ki=9.76 uM), Kv7.2/KCNQ2 (Ki=3.81 uM) and the heterotetramer formed by Kv7.2 and Kv7.3 (KCNQ2/KCNQ3) (Ki=6.91 uM).</text>
</comment>
<comment type="miscellaneous">
    <text evidence="8">A synonymy between H.magnifica and R.crispa is controversial.</text>
</comment>
<comment type="similarity">
    <text evidence="8">Belongs to the sea anemone type 1 potassium channel toxin family. Type 1a subfamily.</text>
</comment>
<reference key="1">
    <citation type="journal article" date="1997" name="Biochemistry">
        <title>A new potassium channel toxin from the sea anemone Heteractis magnifica: isolation, cDNA cloning, and functional expression.</title>
        <authorList>
            <person name="Gendeh G.S."/>
            <person name="Young L.C."/>
            <person name="de Medeiros C.L.C."/>
            <person name="Jeyaseelan K."/>
            <person name="Harvey A.L."/>
            <person name="Chung M.C.M."/>
        </authorList>
    </citation>
    <scope>NUCLEOTIDE SEQUENCE [MRNA]</scope>
    <scope>PROTEIN SEQUENCE OF 40-74</scope>
    <scope>DISULFIDE BONDS</scope>
    <scope>MASS SPECTROMETRY</scope>
    <scope>FUNCTION</scope>
    <source>
        <tissue>Tentacle</tissue>
    </source>
</reference>
<reference key="2">
    <citation type="journal article" date="1997" name="FEBS Lett.">
        <title>Genomic structure of a potassium channel toxin from Heteractis magnifica.</title>
        <authorList>
            <person name="Gendeh G.S."/>
            <person name="Chung M.C.M."/>
            <person name="Jeyaseelan K."/>
        </authorList>
    </citation>
    <scope>NUCLEOTIDE SEQUENCE [GENOMIC DNA]</scope>
    <source>
        <tissue>Tentacle</tissue>
    </source>
</reference>
<reference key="3">
    <citation type="journal article" date="2024" name="FASEB J.">
        <title>Selective block of human Kv1.1 channels and an epilepsy-associated gain-of-function mutation by AETX-K peptide.</title>
        <authorList>
            <person name="Zhao R."/>
            <person name="Qasim A."/>
            <person name="Sophanpanichkul P."/>
            <person name="Dai H."/>
            <person name="Nayak M."/>
            <person name="Sher I."/>
            <person name="Chill J."/>
            <person name="Goldstein S.A.N."/>
        </authorList>
    </citation>
    <scope>FUNCTION</scope>
    <scope>SYNTHESIS OF 40-74</scope>
</reference>
<reference key="4">
    <citation type="journal article" date="2012" name="Toxicon">
        <title>Development of a rational nomenclature for naming peptide and protein toxins from sea anemones.</title>
        <authorList>
            <person name="Oliveira J.S."/>
            <person name="Fuentes-Silva D."/>
            <person name="King G.F."/>
        </authorList>
    </citation>
    <scope>NOMENCLATURE</scope>
</reference>
<reference key="5">
    <citation type="journal article" date="2020" name="Sci. Adv.">
        <title>Tethered peptide neurotoxins display two blocking mechanisms in the K+ channel pore as do their untethered analogs.</title>
        <authorList>
            <person name="Zhao R."/>
            <person name="Dai H."/>
            <person name="Mendelman N."/>
            <person name="Chill J.H."/>
            <person name="Goldstein S.A.N."/>
        </authorList>
    </citation>
    <scope>FUNCTION</scope>
    <scope>STRUCTURE BY NMR OF 40-74</scope>
    <scope>DISULFIDE BONDS</scope>
    <scope>MUTAGENESIS OF GLU-50; ARG-55; THR-58; SER-59; MET-60; LYS-61; TYR-62 AND ARG-63</scope>
</reference>
<proteinExistence type="evidence at protein level"/>
<protein>
    <recommendedName>
        <fullName evidence="6">Kappa-stichotoxin-Hmg1a</fullName>
        <shortName evidence="6">Kappa-SHTX-Hmg1a</shortName>
    </recommendedName>
    <alternativeName>
        <fullName evidence="7">Potassium channel toxin HmK</fullName>
    </alternativeName>
</protein>
<dbReference type="EMBL" id="U58107">
    <property type="protein sequence ID" value="AAD09480.1"/>
    <property type="molecule type" value="mRNA"/>
</dbReference>
<dbReference type="EMBL" id="AF020047">
    <property type="protein sequence ID" value="AAB97830.1"/>
    <property type="molecule type" value="Genomic_DNA"/>
</dbReference>
<dbReference type="SMR" id="O16846"/>
<dbReference type="TCDB" id="8.B.14.1.6">
    <property type="family name" value="the sea anemone peptide toxin, class 1 (bgk) family"/>
</dbReference>
<dbReference type="GO" id="GO:0005576">
    <property type="term" value="C:extracellular region"/>
    <property type="evidence" value="ECO:0007669"/>
    <property type="project" value="UniProtKB-SubCell"/>
</dbReference>
<dbReference type="GO" id="GO:0042151">
    <property type="term" value="C:nematocyst"/>
    <property type="evidence" value="ECO:0007669"/>
    <property type="project" value="UniProtKB-SubCell"/>
</dbReference>
<dbReference type="GO" id="GO:0015459">
    <property type="term" value="F:potassium channel regulator activity"/>
    <property type="evidence" value="ECO:0007669"/>
    <property type="project" value="UniProtKB-KW"/>
</dbReference>
<dbReference type="GO" id="GO:0090729">
    <property type="term" value="F:toxin activity"/>
    <property type="evidence" value="ECO:0007669"/>
    <property type="project" value="UniProtKB-KW"/>
</dbReference>
<dbReference type="InterPro" id="IPR003582">
    <property type="entry name" value="ShKT_dom"/>
</dbReference>
<dbReference type="SUPFAM" id="SSF57546">
    <property type="entry name" value="Crisp domain-like"/>
    <property type="match status" value="1"/>
</dbReference>
<dbReference type="PROSITE" id="PS51670">
    <property type="entry name" value="SHKT"/>
    <property type="match status" value="1"/>
</dbReference>
<organism>
    <name type="scientific">Heteractis magnifica</name>
    <name type="common">Magnificent sea anemone</name>
    <name type="synonym">Radianthus magnifica</name>
    <dbReference type="NCBI Taxonomy" id="38281"/>
    <lineage>
        <taxon>Eukaryota</taxon>
        <taxon>Metazoa</taxon>
        <taxon>Cnidaria</taxon>
        <taxon>Anthozoa</taxon>
        <taxon>Hexacorallia</taxon>
        <taxon>Actiniaria</taxon>
        <taxon>Stichodactylidae</taxon>
        <taxon>Heteractis</taxon>
    </lineage>
</organism>
<evidence type="ECO:0000255" key="1"/>
<evidence type="ECO:0000255" key="2">
    <source>
        <dbReference type="PROSITE-ProRule" id="PRU01005"/>
    </source>
</evidence>
<evidence type="ECO:0000269" key="3">
    <source>
    </source>
</evidence>
<evidence type="ECO:0000269" key="4">
    <source>
    </source>
</evidence>
<evidence type="ECO:0000269" key="5">
    <source>
    </source>
</evidence>
<evidence type="ECO:0000303" key="6">
    <source>
    </source>
</evidence>
<evidence type="ECO:0000303" key="7">
    <source>
    </source>
</evidence>
<evidence type="ECO:0000305" key="8"/>
<evidence type="ECO:0000305" key="9">
    <source>
    </source>
</evidence>
<accession>O16846</accession>
<accession>O97436</accession>
<feature type="signal peptide" evidence="1">
    <location>
        <begin position="1"/>
        <end position="22"/>
    </location>
</feature>
<feature type="propeptide" id="PRO_0000236028" evidence="5">
    <location>
        <begin position="23"/>
        <end position="39"/>
    </location>
</feature>
<feature type="peptide" id="PRO_0000236029" description="Kappa-stichotoxin-Hmg1a" evidence="5">
    <location>
        <begin position="40"/>
        <end position="74"/>
    </location>
</feature>
<feature type="domain" description="ShKT" evidence="2">
    <location>
        <begin position="42"/>
        <end position="74"/>
    </location>
</feature>
<feature type="site" description="Key residue for binding potassium channels Kv1.2/KCNA2, Kv1.3/KCNA3, and KcsA (occludes the channel pore like a cork in a bottle)" evidence="3 4">
    <location>
        <position position="61"/>
    </location>
</feature>
<feature type="disulfide bond" evidence="3 5">
    <location>
        <begin position="42"/>
        <end position="74"/>
    </location>
</feature>
<feature type="disulfide bond" evidence="3 5">
    <location>
        <begin position="51"/>
        <end position="67"/>
    </location>
</feature>
<feature type="disulfide bond" evidence="3 5">
    <location>
        <begin position="56"/>
        <end position="71"/>
    </location>
</feature>
<feature type="mutagenesis site" description="Important decrease of KcsA potassium channel blocking activity." evidence="3">
    <original>E</original>
    <variation>A</variation>
    <location>
        <position position="50"/>
    </location>
</feature>
<feature type="mutagenesis site" description="Loss of KcsA potassium channel blocking activity." evidence="3">
    <original>R</original>
    <variation>Q</variation>
    <location>
        <position position="55"/>
    </location>
</feature>
<feature type="mutagenesis site" description="Important decrease of KcsA potassium channel blocking activity." evidence="3">
    <original>T</original>
    <variation>A</variation>
    <location>
        <position position="58"/>
    </location>
</feature>
<feature type="mutagenesis site" description="Decrease of KcsA potassium channel blocking activity." evidence="3">
    <original>S</original>
    <variation>A</variation>
    <location>
        <position position="59"/>
    </location>
</feature>
<feature type="mutagenesis site" description="Decrease of KcsA potassium channel blocking activity." evidence="3">
    <original>M</original>
    <variation>A</variation>
    <location>
        <position position="60"/>
    </location>
</feature>
<feature type="mutagenesis site" description="Decrease of KcsA potassium channel blocking activity, and dramatic decrease in Kv1.3/KCNA3 potassium channel blocking activity." evidence="3">
    <original>K</original>
    <variation>N</variation>
    <location>
        <position position="61"/>
    </location>
</feature>
<feature type="mutagenesis site" description="Decrease of KcsA potassium channel blocking activity." evidence="3">
    <original>Y</original>
    <variation>A</variation>
    <location>
        <position position="62"/>
    </location>
</feature>
<feature type="mutagenesis site" description="No change on KcsA potassium channel blocking activity, and 3-fold decrease in Kv1.3/KCNA3 potassium channel blocking activity." evidence="3">
    <original>R</original>
    <variation>Q</variation>
    <location>
        <position position="63"/>
    </location>
</feature>
<feature type="sequence conflict" description="In Ref. 2; AAB97830." evidence="8" ref="2">
    <original>I</original>
    <variation>M</variation>
    <location>
        <position position="46"/>
    </location>
</feature>
<name>1AK_HETMG</name>
<sequence length="74" mass="8469">MKSQMIAAVLLIAFCLCVVVTARMELQDVEDMENGFQKRRTCKDLIPVSECTDIRCRTSMKYRLNLCRKTCGSC</sequence>
<keyword id="KW-0165">Cleavage on pair of basic residues</keyword>
<keyword id="KW-0903">Direct protein sequencing</keyword>
<keyword id="KW-1015">Disulfide bond</keyword>
<keyword id="KW-0872">Ion channel impairing toxin</keyword>
<keyword id="KW-0166">Nematocyst</keyword>
<keyword id="KW-0528">Neurotoxin</keyword>
<keyword id="KW-0632">Potassium channel impairing toxin</keyword>
<keyword id="KW-0964">Secreted</keyword>
<keyword id="KW-0732">Signal</keyword>
<keyword id="KW-0800">Toxin</keyword>
<keyword id="KW-1220">Voltage-gated potassium channel impairing toxin</keyword>